<sequence>MAVQQNKKSPSKRGMHRSHDFLTTAPIAVEPTTGEVHLRHHVSPNGYYRGRKVVKTKND</sequence>
<reference key="1">
    <citation type="submission" date="2008-05" db="EMBL/GenBank/DDBJ databases">
        <title>Complete sequence of chromosome 1 of Ralstonia pickettii 12J.</title>
        <authorList>
            <person name="Lucas S."/>
            <person name="Copeland A."/>
            <person name="Lapidus A."/>
            <person name="Glavina del Rio T."/>
            <person name="Dalin E."/>
            <person name="Tice H."/>
            <person name="Bruce D."/>
            <person name="Goodwin L."/>
            <person name="Pitluck S."/>
            <person name="Meincke L."/>
            <person name="Brettin T."/>
            <person name="Detter J.C."/>
            <person name="Han C."/>
            <person name="Kuske C.R."/>
            <person name="Schmutz J."/>
            <person name="Larimer F."/>
            <person name="Land M."/>
            <person name="Hauser L."/>
            <person name="Kyrpides N."/>
            <person name="Mikhailova N."/>
            <person name="Marsh T."/>
            <person name="Richardson P."/>
        </authorList>
    </citation>
    <scope>NUCLEOTIDE SEQUENCE [LARGE SCALE GENOMIC DNA]</scope>
    <source>
        <strain>12J</strain>
    </source>
</reference>
<keyword id="KW-0687">Ribonucleoprotein</keyword>
<keyword id="KW-0689">Ribosomal protein</keyword>
<accession>B2U966</accession>
<name>RL32_RALPJ</name>
<gene>
    <name evidence="1" type="primary">rpmF</name>
    <name type="ordered locus">Rpic_0913</name>
</gene>
<protein>
    <recommendedName>
        <fullName evidence="1">Large ribosomal subunit protein bL32</fullName>
    </recommendedName>
    <alternativeName>
        <fullName evidence="3">50S ribosomal protein L32</fullName>
    </alternativeName>
</protein>
<proteinExistence type="inferred from homology"/>
<feature type="chain" id="PRO_1000120163" description="Large ribosomal subunit protein bL32">
    <location>
        <begin position="1"/>
        <end position="59"/>
    </location>
</feature>
<feature type="region of interest" description="Disordered" evidence="2">
    <location>
        <begin position="1"/>
        <end position="59"/>
    </location>
</feature>
<feature type="compositionally biased region" description="Basic residues" evidence="2">
    <location>
        <begin position="49"/>
        <end position="59"/>
    </location>
</feature>
<comment type="similarity">
    <text evidence="1">Belongs to the bacterial ribosomal protein bL32 family.</text>
</comment>
<organism>
    <name type="scientific">Ralstonia pickettii (strain 12J)</name>
    <dbReference type="NCBI Taxonomy" id="402626"/>
    <lineage>
        <taxon>Bacteria</taxon>
        <taxon>Pseudomonadati</taxon>
        <taxon>Pseudomonadota</taxon>
        <taxon>Betaproteobacteria</taxon>
        <taxon>Burkholderiales</taxon>
        <taxon>Burkholderiaceae</taxon>
        <taxon>Ralstonia</taxon>
    </lineage>
</organism>
<evidence type="ECO:0000255" key="1">
    <source>
        <dbReference type="HAMAP-Rule" id="MF_00340"/>
    </source>
</evidence>
<evidence type="ECO:0000256" key="2">
    <source>
        <dbReference type="SAM" id="MobiDB-lite"/>
    </source>
</evidence>
<evidence type="ECO:0000305" key="3"/>
<dbReference type="EMBL" id="CP001068">
    <property type="protein sequence ID" value="ACD26063.1"/>
    <property type="molecule type" value="Genomic_DNA"/>
</dbReference>
<dbReference type="SMR" id="B2U966"/>
<dbReference type="STRING" id="402626.Rpic_0913"/>
<dbReference type="KEGG" id="rpi:Rpic_0913"/>
<dbReference type="eggNOG" id="COG0333">
    <property type="taxonomic scope" value="Bacteria"/>
</dbReference>
<dbReference type="HOGENOM" id="CLU_129084_2_1_4"/>
<dbReference type="GO" id="GO:0015934">
    <property type="term" value="C:large ribosomal subunit"/>
    <property type="evidence" value="ECO:0007669"/>
    <property type="project" value="InterPro"/>
</dbReference>
<dbReference type="GO" id="GO:0003735">
    <property type="term" value="F:structural constituent of ribosome"/>
    <property type="evidence" value="ECO:0007669"/>
    <property type="project" value="InterPro"/>
</dbReference>
<dbReference type="GO" id="GO:0006412">
    <property type="term" value="P:translation"/>
    <property type="evidence" value="ECO:0007669"/>
    <property type="project" value="UniProtKB-UniRule"/>
</dbReference>
<dbReference type="HAMAP" id="MF_00340">
    <property type="entry name" value="Ribosomal_bL32"/>
    <property type="match status" value="1"/>
</dbReference>
<dbReference type="InterPro" id="IPR002677">
    <property type="entry name" value="Ribosomal_bL32"/>
</dbReference>
<dbReference type="InterPro" id="IPR044957">
    <property type="entry name" value="Ribosomal_bL32_bact"/>
</dbReference>
<dbReference type="InterPro" id="IPR011332">
    <property type="entry name" value="Ribosomal_zn-bd"/>
</dbReference>
<dbReference type="NCBIfam" id="TIGR01031">
    <property type="entry name" value="rpmF_bact"/>
    <property type="match status" value="1"/>
</dbReference>
<dbReference type="PANTHER" id="PTHR35534">
    <property type="entry name" value="50S RIBOSOMAL PROTEIN L32"/>
    <property type="match status" value="1"/>
</dbReference>
<dbReference type="PANTHER" id="PTHR35534:SF1">
    <property type="entry name" value="LARGE RIBOSOMAL SUBUNIT PROTEIN BL32"/>
    <property type="match status" value="1"/>
</dbReference>
<dbReference type="Pfam" id="PF01783">
    <property type="entry name" value="Ribosomal_L32p"/>
    <property type="match status" value="1"/>
</dbReference>
<dbReference type="SUPFAM" id="SSF57829">
    <property type="entry name" value="Zn-binding ribosomal proteins"/>
    <property type="match status" value="1"/>
</dbReference>